<gene>
    <name type="primary">RPC11</name>
    <name type="ordered locus">YDR045C</name>
    <name type="ORF">YD9609.01C</name>
</gene>
<sequence length="110" mass="12513">MLSFCPSCNNMLLITSGDSGVYTLACRSCPYEFPIEGIEIYDRKKLPRKEVDDVLGGGWDNVDQTKTQCPNYDTCGGESAYFFQLQIRSADEPMTTFYKCVNCGHRWKEN</sequence>
<proteinExistence type="evidence at protein level"/>
<organism>
    <name type="scientific">Saccharomyces cerevisiae (strain ATCC 204508 / S288c)</name>
    <name type="common">Baker's yeast</name>
    <dbReference type="NCBI Taxonomy" id="559292"/>
    <lineage>
        <taxon>Eukaryota</taxon>
        <taxon>Fungi</taxon>
        <taxon>Dikarya</taxon>
        <taxon>Ascomycota</taxon>
        <taxon>Saccharomycotina</taxon>
        <taxon>Saccharomycetes</taxon>
        <taxon>Saccharomycetales</taxon>
        <taxon>Saccharomycetaceae</taxon>
        <taxon>Saccharomyces</taxon>
    </lineage>
</organism>
<dbReference type="EMBL" id="AF108188">
    <property type="protein sequence ID" value="AAD12060.1"/>
    <property type="molecule type" value="Genomic_DNA"/>
</dbReference>
<dbReference type="EMBL" id="Z49209">
    <property type="protein sequence ID" value="CAA89076.1"/>
    <property type="molecule type" value="Genomic_DNA"/>
</dbReference>
<dbReference type="EMBL" id="AY557636">
    <property type="protein sequence ID" value="AAS55962.1"/>
    <property type="molecule type" value="Genomic_DNA"/>
</dbReference>
<dbReference type="EMBL" id="AY899253">
    <property type="protein sequence ID" value="AAX83938.1"/>
    <property type="molecule type" value="mRNA"/>
</dbReference>
<dbReference type="EMBL" id="BK006938">
    <property type="protein sequence ID" value="DAA11893.1"/>
    <property type="molecule type" value="Genomic_DNA"/>
</dbReference>
<dbReference type="PIR" id="S54031">
    <property type="entry name" value="S54031"/>
</dbReference>
<dbReference type="RefSeq" id="NP_010330.1">
    <property type="nucleotide sequence ID" value="NM_001180353.1"/>
</dbReference>
<dbReference type="PDB" id="3QT1">
    <property type="method" value="X-ray"/>
    <property type="resolution" value="4.30 A"/>
    <property type="chains" value="I=85-110"/>
</dbReference>
<dbReference type="PDB" id="5FJ8">
    <property type="method" value="EM"/>
    <property type="resolution" value="3.90 A"/>
    <property type="chains" value="I=1-110"/>
</dbReference>
<dbReference type="PDB" id="5FJ9">
    <property type="method" value="EM"/>
    <property type="resolution" value="4.60 A"/>
    <property type="chains" value="I=1-110"/>
</dbReference>
<dbReference type="PDB" id="5FJA">
    <property type="method" value="EM"/>
    <property type="resolution" value="4.65 A"/>
    <property type="chains" value="I=1-110"/>
</dbReference>
<dbReference type="PDB" id="6CNB">
    <property type="method" value="EM"/>
    <property type="resolution" value="4.10 A"/>
    <property type="chains" value="I=1-110"/>
</dbReference>
<dbReference type="PDB" id="6CNC">
    <property type="method" value="EM"/>
    <property type="resolution" value="4.10 A"/>
    <property type="chains" value="I=1-110"/>
</dbReference>
<dbReference type="PDB" id="6CND">
    <property type="method" value="EM"/>
    <property type="resolution" value="4.80 A"/>
    <property type="chains" value="I=1-110"/>
</dbReference>
<dbReference type="PDB" id="6CNF">
    <property type="method" value="EM"/>
    <property type="resolution" value="4.50 A"/>
    <property type="chains" value="I=1-110"/>
</dbReference>
<dbReference type="PDB" id="6EU0">
    <property type="method" value="EM"/>
    <property type="resolution" value="4.00 A"/>
    <property type="chains" value="I=1-110"/>
</dbReference>
<dbReference type="PDB" id="6EU1">
    <property type="method" value="EM"/>
    <property type="resolution" value="3.40 A"/>
    <property type="chains" value="I=1-110"/>
</dbReference>
<dbReference type="PDB" id="6EU2">
    <property type="method" value="EM"/>
    <property type="resolution" value="3.40 A"/>
    <property type="chains" value="I=1-110"/>
</dbReference>
<dbReference type="PDB" id="6EU3">
    <property type="method" value="EM"/>
    <property type="resolution" value="3.30 A"/>
    <property type="chains" value="I=1-110"/>
</dbReference>
<dbReference type="PDB" id="6F40">
    <property type="method" value="EM"/>
    <property type="resolution" value="3.70 A"/>
    <property type="chains" value="I=1-110"/>
</dbReference>
<dbReference type="PDB" id="6F41">
    <property type="method" value="EM"/>
    <property type="resolution" value="4.30 A"/>
    <property type="chains" value="I=1-110"/>
</dbReference>
<dbReference type="PDB" id="6F42">
    <property type="method" value="EM"/>
    <property type="resolution" value="5.50 A"/>
    <property type="chains" value="I=1-110"/>
</dbReference>
<dbReference type="PDB" id="6F44">
    <property type="method" value="EM"/>
    <property type="resolution" value="4.20 A"/>
    <property type="chains" value="I=1-110"/>
</dbReference>
<dbReference type="PDB" id="6TUT">
    <property type="method" value="EM"/>
    <property type="resolution" value="3.25 A"/>
    <property type="chains" value="I=1-110"/>
</dbReference>
<dbReference type="PDB" id="7Z0H">
    <property type="method" value="EM"/>
    <property type="resolution" value="2.60 A"/>
    <property type="chains" value="I=1-110"/>
</dbReference>
<dbReference type="PDB" id="7Z1L">
    <property type="method" value="EM"/>
    <property type="resolution" value="2.80 A"/>
    <property type="chains" value="I=1-110"/>
</dbReference>
<dbReference type="PDB" id="7Z1M">
    <property type="method" value="EM"/>
    <property type="resolution" value="3.40 A"/>
    <property type="chains" value="I=1-110"/>
</dbReference>
<dbReference type="PDB" id="7Z1O">
    <property type="method" value="EM"/>
    <property type="resolution" value="2.70 A"/>
    <property type="chains" value="I=1-110"/>
</dbReference>
<dbReference type="PDB" id="7Z2Z">
    <property type="method" value="EM"/>
    <property type="resolution" value="3.07 A"/>
    <property type="chains" value="I=1-110"/>
</dbReference>
<dbReference type="PDB" id="7Z30">
    <property type="method" value="EM"/>
    <property type="resolution" value="2.90 A"/>
    <property type="chains" value="I=1-110"/>
</dbReference>
<dbReference type="PDB" id="7Z31">
    <property type="method" value="EM"/>
    <property type="resolution" value="2.76 A"/>
    <property type="chains" value="I=1-110"/>
</dbReference>
<dbReference type="PDB" id="8BWS">
    <property type="method" value="EM"/>
    <property type="resolution" value="3.20 A"/>
    <property type="chains" value="I=1-110"/>
</dbReference>
<dbReference type="PDBsum" id="3QT1"/>
<dbReference type="PDBsum" id="5FJ8"/>
<dbReference type="PDBsum" id="5FJ9"/>
<dbReference type="PDBsum" id="5FJA"/>
<dbReference type="PDBsum" id="6CNB"/>
<dbReference type="PDBsum" id="6CNC"/>
<dbReference type="PDBsum" id="6CND"/>
<dbReference type="PDBsum" id="6CNF"/>
<dbReference type="PDBsum" id="6EU0"/>
<dbReference type="PDBsum" id="6EU1"/>
<dbReference type="PDBsum" id="6EU2"/>
<dbReference type="PDBsum" id="6EU3"/>
<dbReference type="PDBsum" id="6F40"/>
<dbReference type="PDBsum" id="6F41"/>
<dbReference type="PDBsum" id="6F42"/>
<dbReference type="PDBsum" id="6F44"/>
<dbReference type="PDBsum" id="6TUT"/>
<dbReference type="PDBsum" id="7Z0H"/>
<dbReference type="PDBsum" id="7Z1L"/>
<dbReference type="PDBsum" id="7Z1M"/>
<dbReference type="PDBsum" id="7Z1O"/>
<dbReference type="PDBsum" id="7Z2Z"/>
<dbReference type="PDBsum" id="7Z30"/>
<dbReference type="PDBsum" id="7Z31"/>
<dbReference type="PDBsum" id="8BWS"/>
<dbReference type="EMDB" id="EMD-10595"/>
<dbReference type="EMDB" id="EMD-14421"/>
<dbReference type="EMDB" id="EMD-14447"/>
<dbReference type="EMDB" id="EMD-14448"/>
<dbReference type="EMDB" id="EMD-14451"/>
<dbReference type="EMDB" id="EMD-14468"/>
<dbReference type="EMDB" id="EMD-14469"/>
<dbReference type="EMDB" id="EMD-14470"/>
<dbReference type="EMDB" id="EMD-16299"/>
<dbReference type="EMDB" id="EMD-3955"/>
<dbReference type="EMDB" id="EMD-3956"/>
<dbReference type="EMDB" id="EMD-3957"/>
<dbReference type="EMDB" id="EMD-3958"/>
<dbReference type="EMDB" id="EMD-4180"/>
<dbReference type="EMDB" id="EMD-4181"/>
<dbReference type="EMDB" id="EMD-4182"/>
<dbReference type="EMDB" id="EMD-4183"/>
<dbReference type="EMDB" id="EMD-7530"/>
<dbReference type="EMDB" id="EMD-7531"/>
<dbReference type="EMDB" id="EMD-7532"/>
<dbReference type="EMDB" id="EMD-7533"/>
<dbReference type="SMR" id="Q04307"/>
<dbReference type="BioGRID" id="32100">
    <property type="interactions" value="315"/>
</dbReference>
<dbReference type="ComplexPortal" id="CPX-2660">
    <property type="entry name" value="DNA-directed RNA polymerase III complex"/>
</dbReference>
<dbReference type="DIP" id="DIP-887N"/>
<dbReference type="FunCoup" id="Q04307">
    <property type="interactions" value="594"/>
</dbReference>
<dbReference type="IntAct" id="Q04307">
    <property type="interactions" value="24"/>
</dbReference>
<dbReference type="MINT" id="Q04307"/>
<dbReference type="STRING" id="4932.YDR045C"/>
<dbReference type="iPTMnet" id="Q04307"/>
<dbReference type="PaxDb" id="4932-YDR045C"/>
<dbReference type="PeptideAtlas" id="Q04307"/>
<dbReference type="EnsemblFungi" id="YDR045C_mRNA">
    <property type="protein sequence ID" value="YDR045C"/>
    <property type="gene ID" value="YDR045C"/>
</dbReference>
<dbReference type="GeneID" id="851615"/>
<dbReference type="KEGG" id="sce:YDR045C"/>
<dbReference type="AGR" id="SGD:S000002452"/>
<dbReference type="SGD" id="S000002452">
    <property type="gene designation" value="RPC11"/>
</dbReference>
<dbReference type="VEuPathDB" id="FungiDB:YDR045C"/>
<dbReference type="eggNOG" id="KOG2906">
    <property type="taxonomic scope" value="Eukaryota"/>
</dbReference>
<dbReference type="GeneTree" id="ENSGT00550000075071"/>
<dbReference type="HOGENOM" id="CLU_093932_3_0_1"/>
<dbReference type="InParanoid" id="Q04307"/>
<dbReference type="OMA" id="MEFCDEC"/>
<dbReference type="OrthoDB" id="282152at2759"/>
<dbReference type="BioCyc" id="YEAST:G3O-29658-MONOMER"/>
<dbReference type="Reactome" id="R-SCE-76066">
    <property type="pathway name" value="RNA Polymerase III Transcription Initiation From Type 2 Promoter"/>
</dbReference>
<dbReference type="BioGRID-ORCS" id="851615">
    <property type="hits" value="3 hits in 10 CRISPR screens"/>
</dbReference>
<dbReference type="CD-CODE" id="E03F929F">
    <property type="entry name" value="Stress granule"/>
</dbReference>
<dbReference type="EvolutionaryTrace" id="Q04307"/>
<dbReference type="PRO" id="PR:Q04307"/>
<dbReference type="Proteomes" id="UP000002311">
    <property type="component" value="Chromosome IV"/>
</dbReference>
<dbReference type="RNAct" id="Q04307">
    <property type="molecule type" value="protein"/>
</dbReference>
<dbReference type="GO" id="GO:0005730">
    <property type="term" value="C:nucleolus"/>
    <property type="evidence" value="ECO:0007669"/>
    <property type="project" value="UniProtKB-SubCell"/>
</dbReference>
<dbReference type="GO" id="GO:0005654">
    <property type="term" value="C:nucleoplasm"/>
    <property type="evidence" value="ECO:0000304"/>
    <property type="project" value="Reactome"/>
</dbReference>
<dbReference type="GO" id="GO:0005634">
    <property type="term" value="C:nucleus"/>
    <property type="evidence" value="ECO:0000303"/>
    <property type="project" value="ComplexPortal"/>
</dbReference>
<dbReference type="GO" id="GO:0005666">
    <property type="term" value="C:RNA polymerase III complex"/>
    <property type="evidence" value="ECO:0000314"/>
    <property type="project" value="SGD"/>
</dbReference>
<dbReference type="GO" id="GO:0003899">
    <property type="term" value="F:DNA-directed RNA polymerase activity"/>
    <property type="evidence" value="ECO:0007669"/>
    <property type="project" value="InterPro"/>
</dbReference>
<dbReference type="GO" id="GO:0003676">
    <property type="term" value="F:nucleic acid binding"/>
    <property type="evidence" value="ECO:0007669"/>
    <property type="project" value="InterPro"/>
</dbReference>
<dbReference type="GO" id="GO:0008270">
    <property type="term" value="F:zinc ion binding"/>
    <property type="evidence" value="ECO:0007669"/>
    <property type="project" value="UniProtKB-KW"/>
</dbReference>
<dbReference type="GO" id="GO:0006386">
    <property type="term" value="P:termination of RNA polymerase III transcription"/>
    <property type="evidence" value="ECO:0000314"/>
    <property type="project" value="ComplexPortal"/>
</dbReference>
<dbReference type="GO" id="GO:0006383">
    <property type="term" value="P:transcription by RNA polymerase III"/>
    <property type="evidence" value="ECO:0000314"/>
    <property type="project" value="ComplexPortal"/>
</dbReference>
<dbReference type="GO" id="GO:0006384">
    <property type="term" value="P:transcription initiation at RNA polymerase III promoter"/>
    <property type="evidence" value="ECO:0000314"/>
    <property type="project" value="ComplexPortal"/>
</dbReference>
<dbReference type="GO" id="GO:0042797">
    <property type="term" value="P:tRNA transcription by RNA polymerase III"/>
    <property type="evidence" value="ECO:0000314"/>
    <property type="project" value="SGD"/>
</dbReference>
<dbReference type="CDD" id="cd10509">
    <property type="entry name" value="Zn-ribbon_RPC11"/>
    <property type="match status" value="1"/>
</dbReference>
<dbReference type="FunFam" id="2.20.25.10:FF:000005">
    <property type="entry name" value="DNA-directed RNA polymerase subunit"/>
    <property type="match status" value="1"/>
</dbReference>
<dbReference type="Gene3D" id="2.20.25.10">
    <property type="match status" value="1"/>
</dbReference>
<dbReference type="InterPro" id="IPR019761">
    <property type="entry name" value="DNA-dir_RNA_pol-M_15_CS"/>
</dbReference>
<dbReference type="InterPro" id="IPR012164">
    <property type="entry name" value="Rpa12/Rpb9/Rpc10/TFS"/>
</dbReference>
<dbReference type="InterPro" id="IPR001529">
    <property type="entry name" value="Zn_ribbon_RPB9"/>
</dbReference>
<dbReference type="InterPro" id="IPR034014">
    <property type="entry name" value="Zn_ribbon_RPC11_C"/>
</dbReference>
<dbReference type="InterPro" id="IPR001222">
    <property type="entry name" value="Znf_TFIIS"/>
</dbReference>
<dbReference type="PANTHER" id="PTHR11239">
    <property type="entry name" value="DNA-DIRECTED RNA POLYMERASE"/>
    <property type="match status" value="1"/>
</dbReference>
<dbReference type="PANTHER" id="PTHR11239:SF12">
    <property type="entry name" value="DNA-DIRECTED RNA POLYMERASE III SUBUNIT RPC10"/>
    <property type="match status" value="1"/>
</dbReference>
<dbReference type="Pfam" id="PF02150">
    <property type="entry name" value="Zn_ribbon_RPB9"/>
    <property type="match status" value="1"/>
</dbReference>
<dbReference type="Pfam" id="PF01096">
    <property type="entry name" value="Zn_ribbon_TFIIS"/>
    <property type="match status" value="1"/>
</dbReference>
<dbReference type="PIRSF" id="PIRSF005586">
    <property type="entry name" value="RNApol_RpoM"/>
    <property type="match status" value="1"/>
</dbReference>
<dbReference type="SMART" id="SM00661">
    <property type="entry name" value="RPOL9"/>
    <property type="match status" value="1"/>
</dbReference>
<dbReference type="SMART" id="SM00440">
    <property type="entry name" value="ZnF_C2C2"/>
    <property type="match status" value="1"/>
</dbReference>
<dbReference type="SUPFAM" id="SSF57783">
    <property type="entry name" value="Zinc beta-ribbon"/>
    <property type="match status" value="1"/>
</dbReference>
<dbReference type="PROSITE" id="PS01030">
    <property type="entry name" value="RNA_POL_M_15KD"/>
    <property type="match status" value="1"/>
</dbReference>
<dbReference type="PROSITE" id="PS51133">
    <property type="entry name" value="ZF_TFIIS_2"/>
    <property type="match status" value="1"/>
</dbReference>
<evidence type="ECO:0000250" key="1">
    <source>
        <dbReference type="UniProtKB" id="P32529"/>
    </source>
</evidence>
<evidence type="ECO:0000255" key="2"/>
<evidence type="ECO:0000255" key="3">
    <source>
        <dbReference type="PROSITE-ProRule" id="PRU00472"/>
    </source>
</evidence>
<evidence type="ECO:0000255" key="4">
    <source>
        <dbReference type="PROSITE-ProRule" id="PRU10145"/>
    </source>
</evidence>
<evidence type="ECO:0000269" key="5">
    <source>
    </source>
</evidence>
<evidence type="ECO:0000305" key="6"/>
<evidence type="ECO:0007829" key="7">
    <source>
        <dbReference type="PDB" id="7Z31"/>
    </source>
</evidence>
<reference key="1">
    <citation type="journal article" date="1998" name="Genes Dev.">
        <title>The RNA cleavage activity of RNA polymerase III is mediated by an essential TFIIS-like subunit and is important for transcription termination.</title>
        <authorList>
            <person name="Chedin S."/>
            <person name="Riva M."/>
            <person name="Schultz P."/>
            <person name="Sentenac A."/>
            <person name="Carles C."/>
        </authorList>
    </citation>
    <scope>NUCLEOTIDE SEQUENCE [GENOMIC DNA]</scope>
    <scope>CHARACTERIZATION</scope>
</reference>
<reference key="2">
    <citation type="journal article" date="1997" name="Nature">
        <title>The nucleotide sequence of Saccharomyces cerevisiae chromosome IV.</title>
        <authorList>
            <person name="Jacq C."/>
            <person name="Alt-Moerbe J."/>
            <person name="Andre B."/>
            <person name="Arnold W."/>
            <person name="Bahr A."/>
            <person name="Ballesta J.P.G."/>
            <person name="Bargues M."/>
            <person name="Baron L."/>
            <person name="Becker A."/>
            <person name="Biteau N."/>
            <person name="Bloecker H."/>
            <person name="Blugeon C."/>
            <person name="Boskovic J."/>
            <person name="Brandt P."/>
            <person name="Brueckner M."/>
            <person name="Buitrago M.J."/>
            <person name="Coster F."/>
            <person name="Delaveau T."/>
            <person name="del Rey F."/>
            <person name="Dujon B."/>
            <person name="Eide L.G."/>
            <person name="Garcia-Cantalejo J.M."/>
            <person name="Goffeau A."/>
            <person name="Gomez-Peris A."/>
            <person name="Granotier C."/>
            <person name="Hanemann V."/>
            <person name="Hankeln T."/>
            <person name="Hoheisel J.D."/>
            <person name="Jaeger W."/>
            <person name="Jimenez A."/>
            <person name="Jonniaux J.-L."/>
            <person name="Kraemer C."/>
            <person name="Kuester H."/>
            <person name="Laamanen P."/>
            <person name="Legros Y."/>
            <person name="Louis E.J."/>
            <person name="Moeller-Rieker S."/>
            <person name="Monnet A."/>
            <person name="Moro M."/>
            <person name="Mueller-Auer S."/>
            <person name="Nussbaumer B."/>
            <person name="Paricio N."/>
            <person name="Paulin L."/>
            <person name="Perea J."/>
            <person name="Perez-Alonso M."/>
            <person name="Perez-Ortin J.E."/>
            <person name="Pohl T.M."/>
            <person name="Prydz H."/>
            <person name="Purnelle B."/>
            <person name="Rasmussen S.W."/>
            <person name="Remacha M.A."/>
            <person name="Revuelta J.L."/>
            <person name="Rieger M."/>
            <person name="Salom D."/>
            <person name="Saluz H.P."/>
            <person name="Saiz J.E."/>
            <person name="Saren A.-M."/>
            <person name="Schaefer M."/>
            <person name="Scharfe M."/>
            <person name="Schmidt E.R."/>
            <person name="Schneider C."/>
            <person name="Scholler P."/>
            <person name="Schwarz S."/>
            <person name="Soler-Mira A."/>
            <person name="Urrestarazu L.A."/>
            <person name="Verhasselt P."/>
            <person name="Vissers S."/>
            <person name="Voet M."/>
            <person name="Volckaert G."/>
            <person name="Wagner G."/>
            <person name="Wambutt R."/>
            <person name="Wedler E."/>
            <person name="Wedler H."/>
            <person name="Woelfl S."/>
            <person name="Harris D.E."/>
            <person name="Bowman S."/>
            <person name="Brown D."/>
            <person name="Churcher C.M."/>
            <person name="Connor R."/>
            <person name="Dedman K."/>
            <person name="Gentles S."/>
            <person name="Hamlin N."/>
            <person name="Hunt S."/>
            <person name="Jones L."/>
            <person name="McDonald S."/>
            <person name="Murphy L.D."/>
            <person name="Niblett D."/>
            <person name="Odell C."/>
            <person name="Oliver K."/>
            <person name="Rajandream M.A."/>
            <person name="Richards C."/>
            <person name="Shore L."/>
            <person name="Walsh S.V."/>
            <person name="Barrell B.G."/>
            <person name="Dietrich F.S."/>
            <person name="Mulligan J.T."/>
            <person name="Allen E."/>
            <person name="Araujo R."/>
            <person name="Aviles E."/>
            <person name="Berno A."/>
            <person name="Carpenter J."/>
            <person name="Chen E."/>
            <person name="Cherry J.M."/>
            <person name="Chung E."/>
            <person name="Duncan M."/>
            <person name="Hunicke-Smith S."/>
            <person name="Hyman R.W."/>
            <person name="Komp C."/>
            <person name="Lashkari D."/>
            <person name="Lew H."/>
            <person name="Lin D."/>
            <person name="Mosedale D."/>
            <person name="Nakahara K."/>
            <person name="Namath A."/>
            <person name="Oefner P."/>
            <person name="Oh C."/>
            <person name="Petel F.X."/>
            <person name="Roberts D."/>
            <person name="Schramm S."/>
            <person name="Schroeder M."/>
            <person name="Shogren T."/>
            <person name="Shroff N."/>
            <person name="Winant A."/>
            <person name="Yelton M.A."/>
            <person name="Botstein D."/>
            <person name="Davis R.W."/>
            <person name="Johnston M."/>
            <person name="Andrews S."/>
            <person name="Brinkman R."/>
            <person name="Cooper J."/>
            <person name="Ding H."/>
            <person name="Du Z."/>
            <person name="Favello A."/>
            <person name="Fulton L."/>
            <person name="Gattung S."/>
            <person name="Greco T."/>
            <person name="Hallsworth K."/>
            <person name="Hawkins J."/>
            <person name="Hillier L.W."/>
            <person name="Jier M."/>
            <person name="Johnson D."/>
            <person name="Johnston L."/>
            <person name="Kirsten J."/>
            <person name="Kucaba T."/>
            <person name="Langston Y."/>
            <person name="Latreille P."/>
            <person name="Le T."/>
            <person name="Mardis E."/>
            <person name="Menezes S."/>
            <person name="Miller N."/>
            <person name="Nhan M."/>
            <person name="Pauley A."/>
            <person name="Peluso D."/>
            <person name="Rifkin L."/>
            <person name="Riles L."/>
            <person name="Taich A."/>
            <person name="Trevaskis E."/>
            <person name="Vignati D."/>
            <person name="Wilcox L."/>
            <person name="Wohldman P."/>
            <person name="Vaudin M."/>
            <person name="Wilson R."/>
            <person name="Waterston R."/>
            <person name="Albermann K."/>
            <person name="Hani J."/>
            <person name="Heumann K."/>
            <person name="Kleine K."/>
            <person name="Mewes H.-W."/>
            <person name="Zollner A."/>
            <person name="Zaccaria P."/>
        </authorList>
    </citation>
    <scope>NUCLEOTIDE SEQUENCE [LARGE SCALE GENOMIC DNA]</scope>
    <source>
        <strain>ATCC 204508 / S288c</strain>
    </source>
</reference>
<reference key="3">
    <citation type="journal article" date="2014" name="G3 (Bethesda)">
        <title>The reference genome sequence of Saccharomyces cerevisiae: Then and now.</title>
        <authorList>
            <person name="Engel S.R."/>
            <person name="Dietrich F.S."/>
            <person name="Fisk D.G."/>
            <person name="Binkley G."/>
            <person name="Balakrishnan R."/>
            <person name="Costanzo M.C."/>
            <person name="Dwight S.S."/>
            <person name="Hitz B.C."/>
            <person name="Karra K."/>
            <person name="Nash R.S."/>
            <person name="Weng S."/>
            <person name="Wong E.D."/>
            <person name="Lloyd P."/>
            <person name="Skrzypek M.S."/>
            <person name="Miyasato S.R."/>
            <person name="Simison M."/>
            <person name="Cherry J.M."/>
        </authorList>
    </citation>
    <scope>GENOME REANNOTATION</scope>
    <source>
        <strain>ATCC 204508 / S288c</strain>
    </source>
</reference>
<reference key="4">
    <citation type="journal article" date="2007" name="Genome Res.">
        <title>Approaching a complete repository of sequence-verified protein-encoding clones for Saccharomyces cerevisiae.</title>
        <authorList>
            <person name="Hu Y."/>
            <person name="Rolfs A."/>
            <person name="Bhullar B."/>
            <person name="Murthy T.V.S."/>
            <person name="Zhu C."/>
            <person name="Berger M.F."/>
            <person name="Camargo A.A."/>
            <person name="Kelley F."/>
            <person name="McCarron S."/>
            <person name="Jepson D."/>
            <person name="Richardson A."/>
            <person name="Raphael J."/>
            <person name="Moreira D."/>
            <person name="Taycher E."/>
            <person name="Zuo D."/>
            <person name="Mohr S."/>
            <person name="Kane M.F."/>
            <person name="Williamson J."/>
            <person name="Simpson A.J.G."/>
            <person name="Bulyk M.L."/>
            <person name="Harlow E."/>
            <person name="Marsischky G."/>
            <person name="Kolodner R.D."/>
            <person name="LaBaer J."/>
        </authorList>
    </citation>
    <scope>NUCLEOTIDE SEQUENCE [GENOMIC DNA]</scope>
    <source>
        <strain>ATCC 204508 / S288c</strain>
    </source>
</reference>
<reference key="5">
    <citation type="journal article" date="2005" name="Nucleic Acids Res.">
        <title>Mapping of transcription start sites in Saccharomyces cerevisiae using 5' SAGE.</title>
        <authorList>
            <person name="Zhang Z."/>
            <person name="Dietrich F.S."/>
        </authorList>
    </citation>
    <scope>NUCLEOTIDE SEQUENCE [MRNA] OF 1-96</scope>
    <source>
        <strain>ATCC 208353 / W303-1A</strain>
    </source>
</reference>
<reference key="6">
    <citation type="journal article" date="1998" name="Cold Spring Harb. Symp. Quant. Biol.">
        <title>The yeast RNA polymerase III transcription machinery: a paradigm for eukaryotic gene activation.</title>
        <authorList>
            <person name="Chedin S."/>
            <person name="Ferri M.L."/>
            <person name="Peyroche G."/>
            <person name="Andrau J.-C."/>
            <person name="Jourdain S."/>
            <person name="Lefebvre O."/>
            <person name="Werner M."/>
            <person name="Carles C."/>
            <person name="Sentenac A."/>
        </authorList>
    </citation>
    <scope>REVIEW ON THE RNA POL III COMPLEX</scope>
</reference>
<reference key="7">
    <citation type="journal article" date="2006" name="EMBO J.">
        <title>A subcomplex of RNA polymerase III subunits involved in transcription termination and reinitiation.</title>
        <authorList>
            <person name="Landrieux E."/>
            <person name="Alic N."/>
            <person name="Ducrot C."/>
            <person name="Acker J."/>
            <person name="Riva M."/>
            <person name="Carles C."/>
        </authorList>
    </citation>
    <scope>FUNCTION</scope>
</reference>
<name>RPC10_YEAST</name>
<keyword id="KW-0002">3D-structure</keyword>
<keyword id="KW-0240">DNA-directed RNA polymerase</keyword>
<keyword id="KW-0479">Metal-binding</keyword>
<keyword id="KW-0539">Nucleus</keyword>
<keyword id="KW-1185">Reference proteome</keyword>
<keyword id="KW-0804">Transcription</keyword>
<keyword id="KW-0862">Zinc</keyword>
<keyword id="KW-0863">Zinc-finger</keyword>
<comment type="function">
    <text evidence="5">DNA-dependent RNA polymerase catalyzes the transcription of DNA into RNA using the four ribonucleoside triphosphates as substrates. Component of RNA polymerase III which synthesizes small RNAs, such as 5S rRNA and tRNAs. Involved in Pol III transcription reinitiation and RNA cleavage during transcription termination.</text>
</comment>
<comment type="subunit">
    <text>Component of the RNA polymerase III (Pol III) complex consisting of 17 subunits.</text>
</comment>
<comment type="subcellular location">
    <subcellularLocation>
        <location evidence="1">Nucleus</location>
        <location evidence="1">Nucleolus</location>
    </subcellularLocation>
</comment>
<comment type="similarity">
    <text evidence="6">Belongs to the archaeal RpoM/eukaryotic RPA12/RPB9/RPC11 RNA polymerase family.</text>
</comment>
<feature type="chain" id="PRO_0000121478" description="DNA-directed RNA polymerase III subunit RPC10">
    <location>
        <begin position="1"/>
        <end position="110"/>
    </location>
</feature>
<feature type="zinc finger region" description="C4-type" evidence="2">
    <location>
        <begin position="5"/>
        <end position="29"/>
    </location>
</feature>
<feature type="zinc finger region" description="TFIIS-type" evidence="3">
    <location>
        <begin position="65"/>
        <end position="108"/>
    </location>
</feature>
<feature type="binding site" evidence="4">
    <location>
        <position position="5"/>
    </location>
    <ligand>
        <name>Zn(2+)</name>
        <dbReference type="ChEBI" id="CHEBI:29105"/>
        <label>1</label>
    </ligand>
</feature>
<feature type="binding site" evidence="4">
    <location>
        <position position="8"/>
    </location>
    <ligand>
        <name>Zn(2+)</name>
        <dbReference type="ChEBI" id="CHEBI:29105"/>
        <label>1</label>
    </ligand>
</feature>
<feature type="binding site" evidence="4">
    <location>
        <position position="26"/>
    </location>
    <ligand>
        <name>Zn(2+)</name>
        <dbReference type="ChEBI" id="CHEBI:29105"/>
        <label>1</label>
    </ligand>
</feature>
<feature type="binding site" evidence="4">
    <location>
        <position position="29"/>
    </location>
    <ligand>
        <name>Zn(2+)</name>
        <dbReference type="ChEBI" id="CHEBI:29105"/>
        <label>1</label>
    </ligand>
</feature>
<feature type="binding site" evidence="3">
    <location>
        <position position="69"/>
    </location>
    <ligand>
        <name>Zn(2+)</name>
        <dbReference type="ChEBI" id="CHEBI:29105"/>
        <label>2</label>
    </ligand>
</feature>
<feature type="binding site" evidence="3">
    <location>
        <position position="75"/>
    </location>
    <ligand>
        <name>Zn(2+)</name>
        <dbReference type="ChEBI" id="CHEBI:29105"/>
        <label>2</label>
    </ligand>
</feature>
<feature type="binding site" evidence="3">
    <location>
        <position position="100"/>
    </location>
    <ligand>
        <name>Zn(2+)</name>
        <dbReference type="ChEBI" id="CHEBI:29105"/>
        <label>2</label>
    </ligand>
</feature>
<feature type="binding site" evidence="3">
    <location>
        <position position="103"/>
    </location>
    <ligand>
        <name>Zn(2+)</name>
        <dbReference type="ChEBI" id="CHEBI:29105"/>
        <label>2</label>
    </ligand>
</feature>
<feature type="turn" evidence="7">
    <location>
        <begin position="6"/>
        <end position="8"/>
    </location>
</feature>
<feature type="strand" evidence="7">
    <location>
        <begin position="14"/>
        <end position="16"/>
    </location>
</feature>
<feature type="helix" evidence="7">
    <location>
        <begin position="18"/>
        <end position="20"/>
    </location>
</feature>
<feature type="strand" evidence="7">
    <location>
        <begin position="22"/>
        <end position="25"/>
    </location>
</feature>
<feature type="strand" evidence="7">
    <location>
        <begin position="27"/>
        <end position="30"/>
    </location>
</feature>
<accession>Q04307</accession>
<accession>D6VS33</accession>
<accession>Q2VQW5</accession>
<protein>
    <recommendedName>
        <fullName>DNA-directed RNA polymerase III subunit RPC10</fullName>
        <shortName>RNA polymerase III subunit C10</shortName>
    </recommendedName>
    <alternativeName>
        <fullName>DNA-directed RNA polymerases III 12.5 kDa polypeptide</fullName>
    </alternativeName>
    <alternativeName>
        <fullName>RNA polymerase III subunit C11</fullName>
    </alternativeName>
</protein>